<sequence>MSDRQQVTNAKGERIAIVAGLRTPFAKQATAFHGVSALDMGKMVVNELLARSELDPKLIEQLVYGQVVQMPAAPNIAREIVLGTGMNVSTDAYSVTRACATSFQSAVNVAESIMTGNIEIGIAGGADSSSVLPIGVSKKLAHALVDLNKARSFGQKLQIFRRLGIKDLLPVPPAVAEYSTGLSMGQTAEQMAKTYNISRADQDALAHRSHTLASETWASGHLRDEVMVAHVPPYKQFIDRDNNIRENSVLESYAKLRPAFDKQHGTVTAANSTPLTDGASAIILMSEGRAKALGYQPIGYIKSYAFSAIDVWQDMLMGPSYATPLALKRAGMELEDLTLIEMHEAFAAQTLANMQMFASKKFAEEKLGRNRAIGEIDMSKFNVLGGSLAYGHPFAATGTRLITQVCRELKRRGGGTGLTTACAAGGLGVAMIVEVE</sequence>
<organism>
    <name type="scientific">Shewanella baltica (strain OS195)</name>
    <dbReference type="NCBI Taxonomy" id="399599"/>
    <lineage>
        <taxon>Bacteria</taxon>
        <taxon>Pseudomonadati</taxon>
        <taxon>Pseudomonadota</taxon>
        <taxon>Gammaproteobacteria</taxon>
        <taxon>Alteromonadales</taxon>
        <taxon>Shewanellaceae</taxon>
        <taxon>Shewanella</taxon>
    </lineage>
</organism>
<reference key="1">
    <citation type="submission" date="2007-11" db="EMBL/GenBank/DDBJ databases">
        <title>Complete sequence of chromosome of Shewanella baltica OS195.</title>
        <authorList>
            <consortium name="US DOE Joint Genome Institute"/>
            <person name="Copeland A."/>
            <person name="Lucas S."/>
            <person name="Lapidus A."/>
            <person name="Barry K."/>
            <person name="Glavina del Rio T."/>
            <person name="Dalin E."/>
            <person name="Tice H."/>
            <person name="Pitluck S."/>
            <person name="Chain P."/>
            <person name="Malfatti S."/>
            <person name="Shin M."/>
            <person name="Vergez L."/>
            <person name="Schmutz J."/>
            <person name="Larimer F."/>
            <person name="Land M."/>
            <person name="Hauser L."/>
            <person name="Kyrpides N."/>
            <person name="Kim E."/>
            <person name="Brettar I."/>
            <person name="Rodrigues J."/>
            <person name="Konstantinidis K."/>
            <person name="Klappenbach J."/>
            <person name="Hofle M."/>
            <person name="Tiedje J."/>
            <person name="Richardson P."/>
        </authorList>
    </citation>
    <scope>NUCLEOTIDE SEQUENCE [LARGE SCALE GENOMIC DNA]</scope>
    <source>
        <strain>OS195</strain>
    </source>
</reference>
<comment type="function">
    <text evidence="1">Catalyzes the final step of fatty acid oxidation in which acetyl-CoA is released and the CoA ester of a fatty acid two carbons shorter is formed.</text>
</comment>
<comment type="catalytic activity">
    <reaction evidence="1">
        <text>an acyl-CoA + acetyl-CoA = a 3-oxoacyl-CoA + CoA</text>
        <dbReference type="Rhea" id="RHEA:21564"/>
        <dbReference type="ChEBI" id="CHEBI:57287"/>
        <dbReference type="ChEBI" id="CHEBI:57288"/>
        <dbReference type="ChEBI" id="CHEBI:58342"/>
        <dbReference type="ChEBI" id="CHEBI:90726"/>
        <dbReference type="EC" id="2.3.1.16"/>
    </reaction>
</comment>
<comment type="pathway">
    <text evidence="1">Lipid metabolism; fatty acid beta-oxidation.</text>
</comment>
<comment type="subunit">
    <text evidence="1">Heterotetramer of two alpha chains (FadJ) and two beta chains (FadI).</text>
</comment>
<comment type="subcellular location">
    <subcellularLocation>
        <location evidence="1">Cytoplasm</location>
    </subcellularLocation>
</comment>
<comment type="similarity">
    <text evidence="1">Belongs to the thiolase-like superfamily. Thiolase family.</text>
</comment>
<keyword id="KW-0012">Acyltransferase</keyword>
<keyword id="KW-0963">Cytoplasm</keyword>
<keyword id="KW-0276">Fatty acid metabolism</keyword>
<keyword id="KW-0442">Lipid degradation</keyword>
<keyword id="KW-0443">Lipid metabolism</keyword>
<keyword id="KW-0808">Transferase</keyword>
<protein>
    <recommendedName>
        <fullName evidence="1">3-ketoacyl-CoA thiolase</fullName>
        <ecNumber evidence="1">2.3.1.16</ecNumber>
    </recommendedName>
    <alternativeName>
        <fullName evidence="1">ACSs</fullName>
    </alternativeName>
    <alternativeName>
        <fullName evidence="1">Acetyl-CoA acyltransferase</fullName>
    </alternativeName>
    <alternativeName>
        <fullName evidence="1">Acyl-CoA ligase</fullName>
    </alternativeName>
    <alternativeName>
        <fullName evidence="1">Beta-ketothiolase</fullName>
    </alternativeName>
    <alternativeName>
        <fullName evidence="1">Fatty acid oxidation complex subunit beta</fullName>
    </alternativeName>
</protein>
<name>FADI_SHEB9</name>
<proteinExistence type="inferred from homology"/>
<dbReference type="EC" id="2.3.1.16" evidence="1"/>
<dbReference type="EMBL" id="CP000891">
    <property type="protein sequence ID" value="ABX50022.1"/>
    <property type="molecule type" value="Genomic_DNA"/>
</dbReference>
<dbReference type="RefSeq" id="WP_006082247.1">
    <property type="nucleotide sequence ID" value="NC_009997.1"/>
</dbReference>
<dbReference type="SMR" id="A9KTW7"/>
<dbReference type="GeneID" id="11772942"/>
<dbReference type="KEGG" id="sbn:Sbal195_2856"/>
<dbReference type="HOGENOM" id="CLU_031026_2_0_6"/>
<dbReference type="UniPathway" id="UPA00659"/>
<dbReference type="Proteomes" id="UP000000770">
    <property type="component" value="Chromosome"/>
</dbReference>
<dbReference type="GO" id="GO:0005829">
    <property type="term" value="C:cytosol"/>
    <property type="evidence" value="ECO:0007669"/>
    <property type="project" value="TreeGrafter"/>
</dbReference>
<dbReference type="GO" id="GO:0003988">
    <property type="term" value="F:acetyl-CoA C-acyltransferase activity"/>
    <property type="evidence" value="ECO:0007669"/>
    <property type="project" value="UniProtKB-UniRule"/>
</dbReference>
<dbReference type="GO" id="GO:0006635">
    <property type="term" value="P:fatty acid beta-oxidation"/>
    <property type="evidence" value="ECO:0007669"/>
    <property type="project" value="UniProtKB-UniRule"/>
</dbReference>
<dbReference type="CDD" id="cd00751">
    <property type="entry name" value="thiolase"/>
    <property type="match status" value="1"/>
</dbReference>
<dbReference type="FunFam" id="3.40.47.10:FF:000011">
    <property type="entry name" value="3-ketoacyl-CoA thiolase"/>
    <property type="match status" value="1"/>
</dbReference>
<dbReference type="Gene3D" id="3.40.47.10">
    <property type="match status" value="1"/>
</dbReference>
<dbReference type="HAMAP" id="MF_01618">
    <property type="entry name" value="FadI"/>
    <property type="match status" value="1"/>
</dbReference>
<dbReference type="InterPro" id="IPR050521">
    <property type="entry name" value="3-ketoacyl-CoA_Thiolase"/>
</dbReference>
<dbReference type="InterPro" id="IPR012806">
    <property type="entry name" value="Ac-CoA_C-AcTrfase_FadI"/>
</dbReference>
<dbReference type="InterPro" id="IPR002155">
    <property type="entry name" value="Thiolase"/>
</dbReference>
<dbReference type="InterPro" id="IPR016039">
    <property type="entry name" value="Thiolase-like"/>
</dbReference>
<dbReference type="InterPro" id="IPR020610">
    <property type="entry name" value="Thiolase_AS"/>
</dbReference>
<dbReference type="InterPro" id="IPR020617">
    <property type="entry name" value="Thiolase_C"/>
</dbReference>
<dbReference type="InterPro" id="IPR020613">
    <property type="entry name" value="Thiolase_CS"/>
</dbReference>
<dbReference type="InterPro" id="IPR020616">
    <property type="entry name" value="Thiolase_N"/>
</dbReference>
<dbReference type="NCBIfam" id="TIGR01930">
    <property type="entry name" value="AcCoA-C-Actrans"/>
    <property type="match status" value="1"/>
</dbReference>
<dbReference type="NCBIfam" id="TIGR02446">
    <property type="entry name" value="FadI"/>
    <property type="match status" value="1"/>
</dbReference>
<dbReference type="NCBIfam" id="NF006516">
    <property type="entry name" value="PRK08963.1"/>
    <property type="match status" value="1"/>
</dbReference>
<dbReference type="PANTHER" id="PTHR42689">
    <property type="entry name" value="ACETYL-COA ACYLTRANSFERASE FADA2 (3-KETOACYL-COA THIOLASE) (BETA-KETOTHIOLASE)-RELATED"/>
    <property type="match status" value="1"/>
</dbReference>
<dbReference type="PANTHER" id="PTHR42689:SF1">
    <property type="entry name" value="ACETYL-COA ACYLTRANSFERASE FADA2 (3-KETOACYL-COA THIOLASE) (BETA-KETOTHIOLASE)-RELATED"/>
    <property type="match status" value="1"/>
</dbReference>
<dbReference type="Pfam" id="PF02803">
    <property type="entry name" value="Thiolase_C"/>
    <property type="match status" value="1"/>
</dbReference>
<dbReference type="Pfam" id="PF00108">
    <property type="entry name" value="Thiolase_N"/>
    <property type="match status" value="1"/>
</dbReference>
<dbReference type="PIRSF" id="PIRSF000429">
    <property type="entry name" value="Ac-CoA_Ac_transf"/>
    <property type="match status" value="1"/>
</dbReference>
<dbReference type="SUPFAM" id="SSF53901">
    <property type="entry name" value="Thiolase-like"/>
    <property type="match status" value="2"/>
</dbReference>
<dbReference type="PROSITE" id="PS00737">
    <property type="entry name" value="THIOLASE_2"/>
    <property type="match status" value="1"/>
</dbReference>
<dbReference type="PROSITE" id="PS00099">
    <property type="entry name" value="THIOLASE_3"/>
    <property type="match status" value="1"/>
</dbReference>
<evidence type="ECO:0000255" key="1">
    <source>
        <dbReference type="HAMAP-Rule" id="MF_01618"/>
    </source>
</evidence>
<gene>
    <name evidence="1" type="primary">fadI</name>
    <name type="ordered locus">Sbal195_2856</name>
</gene>
<accession>A9KTW7</accession>
<feature type="chain" id="PRO_1000088067" description="3-ketoacyl-CoA thiolase">
    <location>
        <begin position="1"/>
        <end position="436"/>
    </location>
</feature>
<feature type="active site" description="Acyl-thioester intermediate" evidence="1">
    <location>
        <position position="99"/>
    </location>
</feature>
<feature type="active site" description="Proton acceptor" evidence="1">
    <location>
        <position position="392"/>
    </location>
</feature>
<feature type="active site" description="Proton acceptor" evidence="1">
    <location>
        <position position="422"/>
    </location>
</feature>